<name>TRPA_LEGPL</name>
<keyword id="KW-0028">Amino-acid biosynthesis</keyword>
<keyword id="KW-0057">Aromatic amino acid biosynthesis</keyword>
<keyword id="KW-0456">Lyase</keyword>
<keyword id="KW-0822">Tryptophan biosynthesis</keyword>
<gene>
    <name evidence="1" type="primary">trpA</name>
    <name type="ordered locus">lpl1268</name>
</gene>
<organism>
    <name type="scientific">Legionella pneumophila (strain Lens)</name>
    <dbReference type="NCBI Taxonomy" id="297245"/>
    <lineage>
        <taxon>Bacteria</taxon>
        <taxon>Pseudomonadati</taxon>
        <taxon>Pseudomonadota</taxon>
        <taxon>Gammaproteobacteria</taxon>
        <taxon>Legionellales</taxon>
        <taxon>Legionellaceae</taxon>
        <taxon>Legionella</taxon>
    </lineage>
</organism>
<sequence>MNRIDKTLEKLKANRKKMLSPYITAGDPYPELTVSLMHQLVKSGADVLELGIPFSDPMAEGPVIQRAMERALAHSIHCDDVLNMVRQFRKTDTETPVILMGYLNPIEQYGYDLFAQQAVEAGVDGTILVDLPPEEADGVSRVWQKHGLYSIYLCSPTTSAERMNFINQHANGYLYYVSLKGVTGSDALKLPELKAQYLQRKAQSKLPLMVGFGIKTPEMAAQVAEFADGVIVGAALINEIIEAYEAKKDPLQASGALLSSMRQAIDNIGSMV</sequence>
<reference key="1">
    <citation type="journal article" date="2004" name="Nat. Genet.">
        <title>Evidence in the Legionella pneumophila genome for exploitation of host cell functions and high genome plasticity.</title>
        <authorList>
            <person name="Cazalet C."/>
            <person name="Rusniok C."/>
            <person name="Brueggemann H."/>
            <person name="Zidane N."/>
            <person name="Magnier A."/>
            <person name="Ma L."/>
            <person name="Tichit M."/>
            <person name="Jarraud S."/>
            <person name="Bouchier C."/>
            <person name="Vandenesch F."/>
            <person name="Kunst F."/>
            <person name="Etienne J."/>
            <person name="Glaser P."/>
            <person name="Buchrieser C."/>
        </authorList>
    </citation>
    <scope>NUCLEOTIDE SEQUENCE [LARGE SCALE GENOMIC DNA]</scope>
    <source>
        <strain>Lens</strain>
    </source>
</reference>
<proteinExistence type="inferred from homology"/>
<comment type="function">
    <text evidence="1">The alpha subunit is responsible for the aldol cleavage of indoleglycerol phosphate to indole and glyceraldehyde 3-phosphate.</text>
</comment>
<comment type="catalytic activity">
    <reaction evidence="1">
        <text>(1S,2R)-1-C-(indol-3-yl)glycerol 3-phosphate + L-serine = D-glyceraldehyde 3-phosphate + L-tryptophan + H2O</text>
        <dbReference type="Rhea" id="RHEA:10532"/>
        <dbReference type="ChEBI" id="CHEBI:15377"/>
        <dbReference type="ChEBI" id="CHEBI:33384"/>
        <dbReference type="ChEBI" id="CHEBI:57912"/>
        <dbReference type="ChEBI" id="CHEBI:58866"/>
        <dbReference type="ChEBI" id="CHEBI:59776"/>
        <dbReference type="EC" id="4.2.1.20"/>
    </reaction>
</comment>
<comment type="pathway">
    <text evidence="1">Amino-acid biosynthesis; L-tryptophan biosynthesis; L-tryptophan from chorismate: step 5/5.</text>
</comment>
<comment type="subunit">
    <text evidence="1">Tetramer of two alpha and two beta chains.</text>
</comment>
<comment type="similarity">
    <text evidence="1">Belongs to the TrpA family.</text>
</comment>
<dbReference type="EC" id="4.2.1.20" evidence="1"/>
<dbReference type="EMBL" id="CR628337">
    <property type="protein sequence ID" value="CAH15508.1"/>
    <property type="molecule type" value="Genomic_DNA"/>
</dbReference>
<dbReference type="RefSeq" id="WP_011215347.1">
    <property type="nucleotide sequence ID" value="NC_006369.1"/>
</dbReference>
<dbReference type="SMR" id="Q5WX31"/>
<dbReference type="KEGG" id="lpf:lpl1268"/>
<dbReference type="LegioList" id="lpl1268"/>
<dbReference type="HOGENOM" id="CLU_016734_0_0_6"/>
<dbReference type="UniPathway" id="UPA00035">
    <property type="reaction ID" value="UER00044"/>
</dbReference>
<dbReference type="Proteomes" id="UP000002517">
    <property type="component" value="Chromosome"/>
</dbReference>
<dbReference type="GO" id="GO:0005829">
    <property type="term" value="C:cytosol"/>
    <property type="evidence" value="ECO:0007669"/>
    <property type="project" value="TreeGrafter"/>
</dbReference>
<dbReference type="GO" id="GO:0004834">
    <property type="term" value="F:tryptophan synthase activity"/>
    <property type="evidence" value="ECO:0007669"/>
    <property type="project" value="UniProtKB-UniRule"/>
</dbReference>
<dbReference type="CDD" id="cd04724">
    <property type="entry name" value="Tryptophan_synthase_alpha"/>
    <property type="match status" value="1"/>
</dbReference>
<dbReference type="FunFam" id="3.20.20.70:FF:000037">
    <property type="entry name" value="Tryptophan synthase alpha chain"/>
    <property type="match status" value="1"/>
</dbReference>
<dbReference type="Gene3D" id="3.20.20.70">
    <property type="entry name" value="Aldolase class I"/>
    <property type="match status" value="1"/>
</dbReference>
<dbReference type="HAMAP" id="MF_00131">
    <property type="entry name" value="Trp_synth_alpha"/>
    <property type="match status" value="1"/>
</dbReference>
<dbReference type="InterPro" id="IPR013785">
    <property type="entry name" value="Aldolase_TIM"/>
</dbReference>
<dbReference type="InterPro" id="IPR011060">
    <property type="entry name" value="RibuloseP-bd_barrel"/>
</dbReference>
<dbReference type="InterPro" id="IPR018204">
    <property type="entry name" value="Trp_synthase_alpha_AS"/>
</dbReference>
<dbReference type="InterPro" id="IPR002028">
    <property type="entry name" value="Trp_synthase_suA"/>
</dbReference>
<dbReference type="NCBIfam" id="TIGR00262">
    <property type="entry name" value="trpA"/>
    <property type="match status" value="1"/>
</dbReference>
<dbReference type="PANTHER" id="PTHR43406:SF1">
    <property type="entry name" value="TRYPTOPHAN SYNTHASE ALPHA CHAIN, CHLOROPLASTIC"/>
    <property type="match status" value="1"/>
</dbReference>
<dbReference type="PANTHER" id="PTHR43406">
    <property type="entry name" value="TRYPTOPHAN SYNTHASE, ALPHA CHAIN"/>
    <property type="match status" value="1"/>
</dbReference>
<dbReference type="Pfam" id="PF00290">
    <property type="entry name" value="Trp_syntA"/>
    <property type="match status" value="1"/>
</dbReference>
<dbReference type="SUPFAM" id="SSF51366">
    <property type="entry name" value="Ribulose-phoshate binding barrel"/>
    <property type="match status" value="1"/>
</dbReference>
<dbReference type="PROSITE" id="PS00167">
    <property type="entry name" value="TRP_SYNTHASE_ALPHA"/>
    <property type="match status" value="1"/>
</dbReference>
<accession>Q5WX31</accession>
<protein>
    <recommendedName>
        <fullName evidence="1">Tryptophan synthase alpha chain</fullName>
        <ecNumber evidence="1">4.2.1.20</ecNumber>
    </recommendedName>
</protein>
<evidence type="ECO:0000255" key="1">
    <source>
        <dbReference type="HAMAP-Rule" id="MF_00131"/>
    </source>
</evidence>
<feature type="chain" id="PRO_0000098798" description="Tryptophan synthase alpha chain">
    <location>
        <begin position="1"/>
        <end position="272"/>
    </location>
</feature>
<feature type="active site" description="Proton acceptor" evidence="1">
    <location>
        <position position="49"/>
    </location>
</feature>
<feature type="active site" description="Proton acceptor" evidence="1">
    <location>
        <position position="60"/>
    </location>
</feature>